<gene>
    <name evidence="1" type="primary">rnc</name>
    <name type="synonym">rncS</name>
    <name type="ordered locus">lin1919</name>
</gene>
<proteinExistence type="inferred from homology"/>
<comment type="function">
    <text evidence="1">Digests double-stranded RNA. Involved in the processing of primary rRNA transcript to yield the immediate precursors to the large and small rRNAs (23S and 16S). Processes some mRNAs, and tRNAs when they are encoded in the rRNA operon. Processes pre-crRNA and tracrRNA of type II CRISPR loci if present in the organism.</text>
</comment>
<comment type="catalytic activity">
    <reaction evidence="1">
        <text>Endonucleolytic cleavage to 5'-phosphomonoester.</text>
        <dbReference type="EC" id="3.1.26.3"/>
    </reaction>
</comment>
<comment type="cofactor">
    <cofactor evidence="1">
        <name>Mg(2+)</name>
        <dbReference type="ChEBI" id="CHEBI:18420"/>
    </cofactor>
</comment>
<comment type="subunit">
    <text evidence="1">Homodimer.</text>
</comment>
<comment type="subcellular location">
    <subcellularLocation>
        <location evidence="1">Cytoplasm</location>
    </subcellularLocation>
</comment>
<comment type="similarity">
    <text evidence="1">Belongs to the ribonuclease III family.</text>
</comment>
<keyword id="KW-0963">Cytoplasm</keyword>
<keyword id="KW-0255">Endonuclease</keyword>
<keyword id="KW-0378">Hydrolase</keyword>
<keyword id="KW-0460">Magnesium</keyword>
<keyword id="KW-0479">Metal-binding</keyword>
<keyword id="KW-0507">mRNA processing</keyword>
<keyword id="KW-0540">Nuclease</keyword>
<keyword id="KW-0694">RNA-binding</keyword>
<keyword id="KW-0698">rRNA processing</keyword>
<keyword id="KW-0699">rRNA-binding</keyword>
<keyword id="KW-0819">tRNA processing</keyword>
<evidence type="ECO:0000255" key="1">
    <source>
        <dbReference type="HAMAP-Rule" id="MF_00104"/>
    </source>
</evidence>
<protein>
    <recommendedName>
        <fullName evidence="1">Ribonuclease 3</fullName>
        <ecNumber evidence="1">3.1.26.3</ecNumber>
    </recommendedName>
    <alternativeName>
        <fullName evidence="1">Ribonuclease III</fullName>
        <shortName evidence="1">RNase III</shortName>
    </alternativeName>
</protein>
<dbReference type="EC" id="3.1.26.3" evidence="1"/>
<dbReference type="EMBL" id="AL596170">
    <property type="protein sequence ID" value="CAC97149.1"/>
    <property type="molecule type" value="Genomic_DNA"/>
</dbReference>
<dbReference type="PIR" id="AE1672">
    <property type="entry name" value="AE1672"/>
</dbReference>
<dbReference type="RefSeq" id="WP_003762908.1">
    <property type="nucleotide sequence ID" value="NC_003212.1"/>
</dbReference>
<dbReference type="SMR" id="Q92AK3"/>
<dbReference type="STRING" id="272626.gene:17566277"/>
<dbReference type="GeneID" id="93235257"/>
<dbReference type="KEGG" id="lin:rncS"/>
<dbReference type="eggNOG" id="COG0571">
    <property type="taxonomic scope" value="Bacteria"/>
</dbReference>
<dbReference type="HOGENOM" id="CLU_000907_1_3_9"/>
<dbReference type="OrthoDB" id="9805026at2"/>
<dbReference type="Proteomes" id="UP000002513">
    <property type="component" value="Chromosome"/>
</dbReference>
<dbReference type="GO" id="GO:0005737">
    <property type="term" value="C:cytoplasm"/>
    <property type="evidence" value="ECO:0007669"/>
    <property type="project" value="UniProtKB-SubCell"/>
</dbReference>
<dbReference type="GO" id="GO:0003725">
    <property type="term" value="F:double-stranded RNA binding"/>
    <property type="evidence" value="ECO:0007669"/>
    <property type="project" value="TreeGrafter"/>
</dbReference>
<dbReference type="GO" id="GO:0046872">
    <property type="term" value="F:metal ion binding"/>
    <property type="evidence" value="ECO:0007669"/>
    <property type="project" value="UniProtKB-KW"/>
</dbReference>
<dbReference type="GO" id="GO:0004525">
    <property type="term" value="F:ribonuclease III activity"/>
    <property type="evidence" value="ECO:0007669"/>
    <property type="project" value="UniProtKB-UniRule"/>
</dbReference>
<dbReference type="GO" id="GO:0019843">
    <property type="term" value="F:rRNA binding"/>
    <property type="evidence" value="ECO:0007669"/>
    <property type="project" value="UniProtKB-KW"/>
</dbReference>
<dbReference type="GO" id="GO:0006397">
    <property type="term" value="P:mRNA processing"/>
    <property type="evidence" value="ECO:0007669"/>
    <property type="project" value="UniProtKB-UniRule"/>
</dbReference>
<dbReference type="GO" id="GO:0010468">
    <property type="term" value="P:regulation of gene expression"/>
    <property type="evidence" value="ECO:0007669"/>
    <property type="project" value="TreeGrafter"/>
</dbReference>
<dbReference type="GO" id="GO:0006364">
    <property type="term" value="P:rRNA processing"/>
    <property type="evidence" value="ECO:0007669"/>
    <property type="project" value="UniProtKB-UniRule"/>
</dbReference>
<dbReference type="GO" id="GO:0008033">
    <property type="term" value="P:tRNA processing"/>
    <property type="evidence" value="ECO:0007669"/>
    <property type="project" value="UniProtKB-KW"/>
</dbReference>
<dbReference type="CDD" id="cd10845">
    <property type="entry name" value="DSRM_RNAse_III_family"/>
    <property type="match status" value="1"/>
</dbReference>
<dbReference type="CDD" id="cd00593">
    <property type="entry name" value="RIBOc"/>
    <property type="match status" value="1"/>
</dbReference>
<dbReference type="FunFam" id="1.10.1520.10:FF:000001">
    <property type="entry name" value="Ribonuclease 3"/>
    <property type="match status" value="1"/>
</dbReference>
<dbReference type="FunFam" id="3.30.160.20:FF:000003">
    <property type="entry name" value="Ribonuclease 3"/>
    <property type="match status" value="1"/>
</dbReference>
<dbReference type="Gene3D" id="3.30.160.20">
    <property type="match status" value="1"/>
</dbReference>
<dbReference type="Gene3D" id="1.10.1520.10">
    <property type="entry name" value="Ribonuclease III domain"/>
    <property type="match status" value="1"/>
</dbReference>
<dbReference type="HAMAP" id="MF_00104">
    <property type="entry name" value="RNase_III"/>
    <property type="match status" value="1"/>
</dbReference>
<dbReference type="InterPro" id="IPR014720">
    <property type="entry name" value="dsRBD_dom"/>
</dbReference>
<dbReference type="InterPro" id="IPR011907">
    <property type="entry name" value="RNase_III"/>
</dbReference>
<dbReference type="InterPro" id="IPR000999">
    <property type="entry name" value="RNase_III_dom"/>
</dbReference>
<dbReference type="InterPro" id="IPR036389">
    <property type="entry name" value="RNase_III_sf"/>
</dbReference>
<dbReference type="NCBIfam" id="TIGR02191">
    <property type="entry name" value="RNaseIII"/>
    <property type="match status" value="1"/>
</dbReference>
<dbReference type="PANTHER" id="PTHR11207:SF0">
    <property type="entry name" value="RIBONUCLEASE 3"/>
    <property type="match status" value="1"/>
</dbReference>
<dbReference type="PANTHER" id="PTHR11207">
    <property type="entry name" value="RIBONUCLEASE III"/>
    <property type="match status" value="1"/>
</dbReference>
<dbReference type="Pfam" id="PF00035">
    <property type="entry name" value="dsrm"/>
    <property type="match status" value="1"/>
</dbReference>
<dbReference type="Pfam" id="PF14622">
    <property type="entry name" value="Ribonucleas_3_3"/>
    <property type="match status" value="1"/>
</dbReference>
<dbReference type="SMART" id="SM00358">
    <property type="entry name" value="DSRM"/>
    <property type="match status" value="1"/>
</dbReference>
<dbReference type="SMART" id="SM00535">
    <property type="entry name" value="RIBOc"/>
    <property type="match status" value="1"/>
</dbReference>
<dbReference type="SUPFAM" id="SSF54768">
    <property type="entry name" value="dsRNA-binding domain-like"/>
    <property type="match status" value="1"/>
</dbReference>
<dbReference type="SUPFAM" id="SSF69065">
    <property type="entry name" value="RNase III domain-like"/>
    <property type="match status" value="1"/>
</dbReference>
<dbReference type="PROSITE" id="PS50137">
    <property type="entry name" value="DS_RBD"/>
    <property type="match status" value="1"/>
</dbReference>
<dbReference type="PROSITE" id="PS00517">
    <property type="entry name" value="RNASE_3_1"/>
    <property type="match status" value="1"/>
</dbReference>
<dbReference type="PROSITE" id="PS50142">
    <property type="entry name" value="RNASE_3_2"/>
    <property type="match status" value="1"/>
</dbReference>
<sequence>MNQWEELQESVGFDFQNVELLQQAFTHSSYVNEHRRENVKDNERLEFLGDAVLELTVSDYLFNKYPDMAEGHMTKMRAAIVCEPSLVEFAEAVHFSKYVRLGKGEEKAGGRTRPALLADVFESFIGALYLDNGIDKVVKFLERVIFPKIDAGAYLQTVDYKTQLQEIVQRDRDVLIEYDILGETGPAHNKAFDAQVIVNGQVLGKGSGRTKKQAEQSAAQFAINQLTHR</sequence>
<feature type="chain" id="PRO_0000180407" description="Ribonuclease 3">
    <location>
        <begin position="1"/>
        <end position="229"/>
    </location>
</feature>
<feature type="domain" description="RNase III" evidence="1">
    <location>
        <begin position="4"/>
        <end position="133"/>
    </location>
</feature>
<feature type="domain" description="DRBM" evidence="1">
    <location>
        <begin position="159"/>
        <end position="228"/>
    </location>
</feature>
<feature type="active site" evidence="1">
    <location>
        <position position="50"/>
    </location>
</feature>
<feature type="active site" evidence="1">
    <location>
        <position position="122"/>
    </location>
</feature>
<feature type="binding site" evidence="1">
    <location>
        <position position="46"/>
    </location>
    <ligand>
        <name>Mg(2+)</name>
        <dbReference type="ChEBI" id="CHEBI:18420"/>
    </ligand>
</feature>
<feature type="binding site" evidence="1">
    <location>
        <position position="119"/>
    </location>
    <ligand>
        <name>Mg(2+)</name>
        <dbReference type="ChEBI" id="CHEBI:18420"/>
    </ligand>
</feature>
<feature type="binding site" evidence="1">
    <location>
        <position position="122"/>
    </location>
    <ligand>
        <name>Mg(2+)</name>
        <dbReference type="ChEBI" id="CHEBI:18420"/>
    </ligand>
</feature>
<reference key="1">
    <citation type="journal article" date="2001" name="Science">
        <title>Comparative genomics of Listeria species.</title>
        <authorList>
            <person name="Glaser P."/>
            <person name="Frangeul L."/>
            <person name="Buchrieser C."/>
            <person name="Rusniok C."/>
            <person name="Amend A."/>
            <person name="Baquero F."/>
            <person name="Berche P."/>
            <person name="Bloecker H."/>
            <person name="Brandt P."/>
            <person name="Chakraborty T."/>
            <person name="Charbit A."/>
            <person name="Chetouani F."/>
            <person name="Couve E."/>
            <person name="de Daruvar A."/>
            <person name="Dehoux P."/>
            <person name="Domann E."/>
            <person name="Dominguez-Bernal G."/>
            <person name="Duchaud E."/>
            <person name="Durant L."/>
            <person name="Dussurget O."/>
            <person name="Entian K.-D."/>
            <person name="Fsihi H."/>
            <person name="Garcia-del Portillo F."/>
            <person name="Garrido P."/>
            <person name="Gautier L."/>
            <person name="Goebel W."/>
            <person name="Gomez-Lopez N."/>
            <person name="Hain T."/>
            <person name="Hauf J."/>
            <person name="Jackson D."/>
            <person name="Jones L.-M."/>
            <person name="Kaerst U."/>
            <person name="Kreft J."/>
            <person name="Kuhn M."/>
            <person name="Kunst F."/>
            <person name="Kurapkat G."/>
            <person name="Madueno E."/>
            <person name="Maitournam A."/>
            <person name="Mata Vicente J."/>
            <person name="Ng E."/>
            <person name="Nedjari H."/>
            <person name="Nordsiek G."/>
            <person name="Novella S."/>
            <person name="de Pablos B."/>
            <person name="Perez-Diaz J.-C."/>
            <person name="Purcell R."/>
            <person name="Remmel B."/>
            <person name="Rose M."/>
            <person name="Schlueter T."/>
            <person name="Simoes N."/>
            <person name="Tierrez A."/>
            <person name="Vazquez-Boland J.-A."/>
            <person name="Voss H."/>
            <person name="Wehland J."/>
            <person name="Cossart P."/>
        </authorList>
    </citation>
    <scope>NUCLEOTIDE SEQUENCE [LARGE SCALE GENOMIC DNA]</scope>
    <source>
        <strain>ATCC BAA-680 / CLIP 11262</strain>
    </source>
</reference>
<accession>Q92AK3</accession>
<name>RNC_LISIN</name>
<organism>
    <name type="scientific">Listeria innocua serovar 6a (strain ATCC BAA-680 / CLIP 11262)</name>
    <dbReference type="NCBI Taxonomy" id="272626"/>
    <lineage>
        <taxon>Bacteria</taxon>
        <taxon>Bacillati</taxon>
        <taxon>Bacillota</taxon>
        <taxon>Bacilli</taxon>
        <taxon>Bacillales</taxon>
        <taxon>Listeriaceae</taxon>
        <taxon>Listeria</taxon>
    </lineage>
</organism>